<keyword id="KW-0067">ATP-binding</keyword>
<keyword id="KW-0347">Helicase</keyword>
<keyword id="KW-0378">Hydrolase</keyword>
<keyword id="KW-0489">Methyltransferase</keyword>
<keyword id="KW-0511">Multifunctional enzyme</keyword>
<keyword id="KW-0547">Nucleotide-binding</keyword>
<keyword id="KW-0548">Nucleotidyltransferase</keyword>
<keyword id="KW-1185">Reference proteome</keyword>
<keyword id="KW-0696">RNA-directed RNA polymerase</keyword>
<keyword id="KW-0808">Transferase</keyword>
<keyword id="KW-0693">Viral RNA replication</keyword>
<organism>
    <name type="scientific">Citrus leprosis virus C (isolate Citrus sinesis/Brazil/Cordeiropolis/2003)</name>
    <name type="common">CiLV-C</name>
    <dbReference type="NCBI Taxonomy" id="686950"/>
    <lineage>
        <taxon>Viruses</taxon>
        <taxon>Riboviria</taxon>
        <taxon>Orthornavirae</taxon>
        <taxon>Kitrinoviricota</taxon>
        <taxon>Alsuviricetes</taxon>
        <taxon>Martellivirales</taxon>
        <taxon>Kitaviridae</taxon>
        <taxon>Cilevirus</taxon>
        <taxon>Cilevirus leprosis</taxon>
    </lineage>
</organism>
<accession>Q1KZ59</accession>
<comment type="function">
    <text evidence="4">RNA replication. The central part of this protein possibly functions as an ATP-binding helicase (Potential).</text>
</comment>
<comment type="catalytic activity">
    <reaction>
        <text>ATP + H2O = ADP + phosphate + H(+)</text>
        <dbReference type="Rhea" id="RHEA:13065"/>
        <dbReference type="ChEBI" id="CHEBI:15377"/>
        <dbReference type="ChEBI" id="CHEBI:15378"/>
        <dbReference type="ChEBI" id="CHEBI:30616"/>
        <dbReference type="ChEBI" id="CHEBI:43474"/>
        <dbReference type="ChEBI" id="CHEBI:456216"/>
        <dbReference type="EC" id="3.6.4.13"/>
    </reaction>
</comment>
<comment type="catalytic activity">
    <reaction evidence="2">
        <text>RNA(n) + a ribonucleoside 5'-triphosphate = RNA(n+1) + diphosphate</text>
        <dbReference type="Rhea" id="RHEA:21248"/>
        <dbReference type="Rhea" id="RHEA-COMP:14527"/>
        <dbReference type="Rhea" id="RHEA-COMP:17342"/>
        <dbReference type="ChEBI" id="CHEBI:33019"/>
        <dbReference type="ChEBI" id="CHEBI:61557"/>
        <dbReference type="ChEBI" id="CHEBI:140395"/>
        <dbReference type="EC" id="2.7.7.48"/>
    </reaction>
</comment>
<reference key="1">
    <citation type="journal article" date="2006" name="J. Gen. Virol.">
        <title>Complete nucleotide sequence, genomic organization and phylogenetic analysis of Citrus leprosis virus cytoplasmic type.</title>
        <authorList>
            <person name="Locali-Fabris E.C."/>
            <person name="Freitas-Astua J."/>
            <person name="Souza A.A."/>
            <person name="Takita M.A."/>
            <person name="Astua-Monge G."/>
            <person name="Antonioli-Luizon R."/>
            <person name="Rodrigues V."/>
            <person name="Targon M.L."/>
            <person name="Machado M.A."/>
        </authorList>
    </citation>
    <scope>NUCLEOTIDE SEQUENCE [GENOMIC RNA]</scope>
</reference>
<reference key="2">
    <citation type="submission" date="2006-01" db="EMBL/GenBank/DDBJ databases">
        <authorList>
            <person name="Locali E.C."/>
            <person name="Freitas-Astua J."/>
            <person name="Souza A.A."/>
            <person name="Takita M.A."/>
            <person name="Astua-Monge G."/>
            <person name="Antonioli-Luizon R."/>
            <person name="Rodrigues V."/>
            <person name="Targon M.L.P.N."/>
            <person name="Machado M.A."/>
        </authorList>
    </citation>
    <scope>NUCLEOTIDE SEQUENCE [GENOMIC RNA]</scope>
</reference>
<sequence length="2512" mass="286515">MSTHSTVETLDVNRVRELLRSHREASSHCDEPRFTATHTKGRVVASSEKPPVSFTIANGQIVSDSEVITSTEAKAAAILSVISSYPKEIREQLNGRIERGFTDNPDVDEAARCIHSARLHNITTTALRKKPLLVHENVSNDMERFLNEKFLGYKIRLTFSKNVAHNNAAALRRVLRFYMRDKVGYRKDDDIPDGYHVKNKDVGASGMDVIADELTDVHCCTPDLDFRDHIRLERLKKYIYSHVCPTSKDHGIICEGFREGSTKYRCENIGQQCYIEAPTLTFVHSAYDITAAGIVDCMIAANAHHAIMCLHFPSAILSGSTSGKDDLLQYKWDIVVEDGIKYYKQKFLNDTQASYVHRLDVYLDKFLTKVVLGSDKRFYMFEITEMFGSVAIIEVFRREKDFIAGSKLTFNIPRTEHPNTVTIHTWEYVTGYESLFKGRNGLKSGVMRPVSIEVPEEFFLSVFKYGMTVDSNKFVYDGLLKSGVGIAARRNIGGTTMVDPSFPIPVRKLQTFIVTMYMLLYQEKWEATQGLVTMKMLADQYRTRSSKNGIVRFLTNVFSPDKVGETQHPSSTYDLGKLGFSHSEDNKFVCDRNLNTEERSRLSQFERLVQWFREFSRVHRKCPIVVHDSTHMLEYVLDIPDMVVQNIKSLRDDLTLSNLCDHDFDAYLPSHIEVNDAKCTKDLTVIQVPGDGNCLYYCFVKACLYRGISVCDLKSRLRDSPYFLEVAKLARDAGEDEFLDSLERDGVYGNKFTLILISKTFNVNICVHLKGGRELITHFISNKGSRFIHLQLEHSHYSLLVPCIKAGLIDEHVLCHGALSMVVPTTHDYRRLVDLYKIYTRDGTIASYFNIFNNSYKGPFLNVYELGFMEIASSLEIPSSSGNKFLITDVWLHHCIKALRVLDPHSNVIVLRSSNTSRIPDRYGVCDFTMDSEFHEESFCLSTTLSDVLNLGIYSQCMVVFSDLSRVPLKPFAPGFRTRTSVAERSNKILLAWSALSSGGTAVFRVFRPEEVPESLNMLTTLFEDIRFFKPKAISTSIVDGYLLCSGKRSHPGSEFSITSEVRNHFYTVNVENFYKQTLEESEVSNYVKDLCGLYAGGGFVKPTRKHSYNRSFVLDRSLILSKLMEFSSSVSFGLFGRKFSTYKLHVGCDTKLKFCNRSIEEILDSQCLHCKYSKYDFNSLRSVSDLASFATRERAVVVETFDDCGDYVSIISFFHKLYSMCFKDLRVVSDCFLNNVVLKSFLAYARCYSDVEISLCQLKGRLLVDITCRSSWYNGCEFGDFELVSCNRHDYDTAFVEVLIQHAMHNQRYNNETIVINSRADAIRAGLSVRKFKPCGDVLDDLNKSVKYKPKFVTYNTESLVNSIKAIVGVGDETTKEPTDNSVVEKPVVVFEKVDSPNLDDRIKAVYEYRSYMGRELSHSNDVLEKTVSNLLRFTETRDPKRLNEMYFPNSSFLSDEMKLKDSVGIITCNGKILKNSEPIVQFDDISAVYDIVNGSVVDKSDYFKMHRGKTTKQVGGFAIYTSLVAHNQVESILKAVDCVYASEKINDLSAISIDWVQAVAGAGKTTLLVETFLITDLVVCPTVENRDSIRLRIKRRYPDLDPKEVDCRVRTINGYLVDFSTKLAKVTLNENTRLLVDEAIMYHAGCLFVLCMIYNIRRMFCVGDKKQIPFVSRIDFKLNYEKLCDFVNTEARPLARTFRSPPDVTYRMQQIYGKSLKGLTIQCLSKNQDTSPSVSKLVITKNYRFGQNFIREVFEKDKIDFDGKNLRILFFLREDMLSFYGNGGMIFTDCCSTIHQFQGSDAEYVVVMRLTYAEKSIFMDERQCLVALTRHTKRMVYVSVNEGTDVLTRWINMPVVESMLVPHLSLSGGGTTTPSRYVTYRSIPSVDLMKGDKCVRVGYHPRSDIILDKRDTLTAVLNKIADARPKGNLVVSSAVLDKFNQQRLKPLLKSIVGHSNIFCAGVNSNINSTVFEVMQLNAVDHVPNHFIDPIFDDDVVRSADIGYKPYRQHDNHDPVLSDYGFDDKFAVIQNFLCTTFPNSCYVPNYMDAWITYNLDLDLAIDDIVINVIKFATIDRTYDCMIPRLSFCSPVVRKACLVESLIAVQKRNRNVPQLSSEVSPYVMADQLFDSLRSLLDERYYQEVHYGPAELAAWLNDQKGSVVDEVIGEYCIYSTAVERYQLITKNSPKPTLSDEAYMEFAAPQVVLHQTKDINAVFCVIWRGIKTVVQSMLRHHNNIFMFADMDPDSFADLLTEKVSTKVQETFDSLEIDIKKYDKSQDLKVLLLECKLLRYFGVSEELVIIWFKSHVESIVKDRRSGLKFKVQVQRRSGDGGTFIGNTLFLIALCARNFDLRKLKLAVFSGDDSLLVGEKRDLQCDSQNFSDLFNLDVKFFPNFKYYHFCSKFLIAVEDRWYFIPDPVKLCIRLARLDLVNWGHIEEYRISLKDTTKYYCDDSIVRELSKAVCDRYPVAVDPAEVFRVVCSIVSSKDEFRLLFEEPLACLPEGNLLPVIN</sequence>
<proteinExistence type="predicted"/>
<feature type="chain" id="PRO_5000141183" description="RNA replication protein">
    <location>
        <begin position="1"/>
        <end position="2512"/>
    </location>
</feature>
<feature type="domain" description="Alphavirus-like MT" evidence="3">
    <location>
        <begin position="156"/>
        <end position="367"/>
    </location>
</feature>
<feature type="domain" description="OTU" evidence="1">
    <location>
        <begin position="683"/>
        <end position="803"/>
    </location>
</feature>
<feature type="domain" description="(+)RNA virus helicase ATP-binding">
    <location>
        <begin position="1520"/>
        <end position="1696"/>
    </location>
</feature>
<feature type="domain" description="(+)RNA virus helicase C-terminal">
    <location>
        <begin position="1697"/>
        <end position="1874"/>
    </location>
</feature>
<feature type="domain" description="RdRp catalytic" evidence="2">
    <location>
        <begin position="2265"/>
        <end position="2378"/>
    </location>
</feature>
<dbReference type="EC" id="2.1.1.-"/>
<dbReference type="EC" id="3.6.4.13"/>
<dbReference type="EC" id="2.7.7.48"/>
<dbReference type="EMBL" id="DQ352194">
    <property type="protein sequence ID" value="ABC75821.1"/>
    <property type="molecule type" value="Genomic_RNA"/>
</dbReference>
<dbReference type="RefSeq" id="YP_654538.1">
    <property type="nucleotide sequence ID" value="NC_008169.1"/>
</dbReference>
<dbReference type="SMR" id="Q1KZ59"/>
<dbReference type="GeneID" id="4155849"/>
<dbReference type="KEGG" id="vg:4155849"/>
<dbReference type="Proteomes" id="UP000001101">
    <property type="component" value="Genome"/>
</dbReference>
<dbReference type="GO" id="GO:0005524">
    <property type="term" value="F:ATP binding"/>
    <property type="evidence" value="ECO:0007669"/>
    <property type="project" value="UniProtKB-KW"/>
</dbReference>
<dbReference type="GO" id="GO:0016887">
    <property type="term" value="F:ATP hydrolysis activity"/>
    <property type="evidence" value="ECO:0007669"/>
    <property type="project" value="RHEA"/>
</dbReference>
<dbReference type="GO" id="GO:0008174">
    <property type="term" value="F:mRNA methyltransferase activity"/>
    <property type="evidence" value="ECO:0007669"/>
    <property type="project" value="InterPro"/>
</dbReference>
<dbReference type="GO" id="GO:0003723">
    <property type="term" value="F:RNA binding"/>
    <property type="evidence" value="ECO:0007669"/>
    <property type="project" value="InterPro"/>
</dbReference>
<dbReference type="GO" id="GO:0003724">
    <property type="term" value="F:RNA helicase activity"/>
    <property type="evidence" value="ECO:0007669"/>
    <property type="project" value="UniProtKB-EC"/>
</dbReference>
<dbReference type="GO" id="GO:0003968">
    <property type="term" value="F:RNA-directed RNA polymerase activity"/>
    <property type="evidence" value="ECO:0007669"/>
    <property type="project" value="UniProtKB-KW"/>
</dbReference>
<dbReference type="GO" id="GO:0006351">
    <property type="term" value="P:DNA-templated transcription"/>
    <property type="evidence" value="ECO:0007669"/>
    <property type="project" value="InterPro"/>
</dbReference>
<dbReference type="GO" id="GO:0032259">
    <property type="term" value="P:methylation"/>
    <property type="evidence" value="ECO:0007669"/>
    <property type="project" value="UniProtKB-KW"/>
</dbReference>
<dbReference type="GO" id="GO:0016556">
    <property type="term" value="P:mRNA modification"/>
    <property type="evidence" value="ECO:0007669"/>
    <property type="project" value="InterPro"/>
</dbReference>
<dbReference type="GO" id="GO:0006396">
    <property type="term" value="P:RNA processing"/>
    <property type="evidence" value="ECO:0007669"/>
    <property type="project" value="InterPro"/>
</dbReference>
<dbReference type="GO" id="GO:0039694">
    <property type="term" value="P:viral RNA genome replication"/>
    <property type="evidence" value="ECO:0007669"/>
    <property type="project" value="InterPro"/>
</dbReference>
<dbReference type="CDD" id="cd23254">
    <property type="entry name" value="Kitaviridae_RdRp"/>
    <property type="match status" value="1"/>
</dbReference>
<dbReference type="CDD" id="cd22792">
    <property type="entry name" value="OTU_RDRP-like"/>
    <property type="match status" value="1"/>
</dbReference>
<dbReference type="Gene3D" id="3.90.70.80">
    <property type="match status" value="1"/>
</dbReference>
<dbReference type="Gene3D" id="3.40.50.300">
    <property type="entry name" value="P-loop containing nucleotide triphosphate hydrolases"/>
    <property type="match status" value="2"/>
</dbReference>
<dbReference type="Gene3D" id="3.40.50.150">
    <property type="entry name" value="Vaccinia Virus protein VP39"/>
    <property type="match status" value="1"/>
</dbReference>
<dbReference type="InterPro" id="IPR027351">
    <property type="entry name" value="(+)RNA_virus_helicase_core_dom"/>
</dbReference>
<dbReference type="InterPro" id="IPR002588">
    <property type="entry name" value="Alphavirus-like_MT_dom"/>
</dbReference>
<dbReference type="InterPro" id="IPR043502">
    <property type="entry name" value="DNA/RNA_pol_sf"/>
</dbReference>
<dbReference type="InterPro" id="IPR003323">
    <property type="entry name" value="OTU_dom"/>
</dbReference>
<dbReference type="InterPro" id="IPR027417">
    <property type="entry name" value="P-loop_NTPase"/>
</dbReference>
<dbReference type="InterPro" id="IPR038765">
    <property type="entry name" value="Papain-like_cys_pep_sf"/>
</dbReference>
<dbReference type="InterPro" id="IPR001788">
    <property type="entry name" value="RNA-dep_RNA_pol_alsuvir"/>
</dbReference>
<dbReference type="InterPro" id="IPR007094">
    <property type="entry name" value="RNA-dir_pol_PSvirus"/>
</dbReference>
<dbReference type="InterPro" id="IPR029063">
    <property type="entry name" value="SAM-dependent_MTases_sf"/>
</dbReference>
<dbReference type="Pfam" id="PF00978">
    <property type="entry name" value="RdRP_2"/>
    <property type="match status" value="1"/>
</dbReference>
<dbReference type="Pfam" id="PF01443">
    <property type="entry name" value="Viral_helicase1"/>
    <property type="match status" value="1"/>
</dbReference>
<dbReference type="SUPFAM" id="SSF54001">
    <property type="entry name" value="Cysteine proteinases"/>
    <property type="match status" value="1"/>
</dbReference>
<dbReference type="SUPFAM" id="SSF56672">
    <property type="entry name" value="DNA/RNA polymerases"/>
    <property type="match status" value="1"/>
</dbReference>
<dbReference type="SUPFAM" id="SSF52540">
    <property type="entry name" value="P-loop containing nucleoside triphosphate hydrolases"/>
    <property type="match status" value="1"/>
</dbReference>
<dbReference type="PROSITE" id="PS51743">
    <property type="entry name" value="ALPHAVIRUS_MT"/>
    <property type="match status" value="1"/>
</dbReference>
<dbReference type="PROSITE" id="PS50802">
    <property type="entry name" value="OTU"/>
    <property type="match status" value="1"/>
</dbReference>
<dbReference type="PROSITE" id="PS51657">
    <property type="entry name" value="PSRV_HELICASE"/>
    <property type="match status" value="1"/>
</dbReference>
<dbReference type="PROSITE" id="PS50507">
    <property type="entry name" value="RDRP_SSRNA_POS"/>
    <property type="match status" value="1"/>
</dbReference>
<name>POLG_CILVC</name>
<organismHost>
    <name type="scientific">Citrus sinensis</name>
    <name type="common">Sweet orange</name>
    <name type="synonym">Citrus aurantium var. sinensis</name>
    <dbReference type="NCBI Taxonomy" id="2711"/>
</organismHost>
<protein>
    <recommendedName>
        <fullName>RNA replication protein</fullName>
    </recommendedName>
    <domain>
        <recommendedName>
            <fullName>Methyltransferase</fullName>
            <ecNumber>2.1.1.-</ecNumber>
        </recommendedName>
    </domain>
    <domain>
        <recommendedName>
            <fullName>Helicase</fullName>
            <ecNumber>3.6.4.13</ecNumber>
        </recommendedName>
    </domain>
    <domain>
        <recommendedName>
            <fullName>RNA-directed RNA polymerase</fullName>
            <ecNumber>2.7.7.48</ecNumber>
        </recommendedName>
    </domain>
</protein>
<evidence type="ECO:0000255" key="1">
    <source>
        <dbReference type="PROSITE-ProRule" id="PRU00139"/>
    </source>
</evidence>
<evidence type="ECO:0000255" key="2">
    <source>
        <dbReference type="PROSITE-ProRule" id="PRU00539"/>
    </source>
</evidence>
<evidence type="ECO:0000255" key="3">
    <source>
        <dbReference type="PROSITE-ProRule" id="PRU01079"/>
    </source>
</evidence>
<evidence type="ECO:0000305" key="4"/>